<dbReference type="EC" id="2.8.1.13" evidence="1"/>
<dbReference type="EMBL" id="CP000950">
    <property type="protein sequence ID" value="ACA68013.1"/>
    <property type="molecule type" value="Genomic_DNA"/>
</dbReference>
<dbReference type="RefSeq" id="WP_002210913.1">
    <property type="nucleotide sequence ID" value="NZ_CP009792.1"/>
</dbReference>
<dbReference type="SMR" id="B1JI67"/>
<dbReference type="GeneID" id="57976935"/>
<dbReference type="KEGG" id="ypy:YPK_1720"/>
<dbReference type="PATRIC" id="fig|502800.11.peg.2384"/>
<dbReference type="GO" id="GO:0005737">
    <property type="term" value="C:cytoplasm"/>
    <property type="evidence" value="ECO:0007669"/>
    <property type="project" value="UniProtKB-SubCell"/>
</dbReference>
<dbReference type="GO" id="GO:0005524">
    <property type="term" value="F:ATP binding"/>
    <property type="evidence" value="ECO:0007669"/>
    <property type="project" value="UniProtKB-KW"/>
</dbReference>
<dbReference type="GO" id="GO:0000049">
    <property type="term" value="F:tRNA binding"/>
    <property type="evidence" value="ECO:0007669"/>
    <property type="project" value="UniProtKB-KW"/>
</dbReference>
<dbReference type="GO" id="GO:0103016">
    <property type="term" value="F:tRNA-uridine 2-sulfurtransferase activity"/>
    <property type="evidence" value="ECO:0007669"/>
    <property type="project" value="UniProtKB-EC"/>
</dbReference>
<dbReference type="GO" id="GO:0002143">
    <property type="term" value="P:tRNA wobble position uridine thiolation"/>
    <property type="evidence" value="ECO:0007669"/>
    <property type="project" value="TreeGrafter"/>
</dbReference>
<dbReference type="CDD" id="cd01998">
    <property type="entry name" value="MnmA_TRMU-like"/>
    <property type="match status" value="1"/>
</dbReference>
<dbReference type="FunFam" id="2.30.30.280:FF:000001">
    <property type="entry name" value="tRNA-specific 2-thiouridylase MnmA"/>
    <property type="match status" value="1"/>
</dbReference>
<dbReference type="FunFam" id="2.40.30.10:FF:000023">
    <property type="entry name" value="tRNA-specific 2-thiouridylase MnmA"/>
    <property type="match status" value="1"/>
</dbReference>
<dbReference type="FunFam" id="3.40.50.620:FF:000004">
    <property type="entry name" value="tRNA-specific 2-thiouridylase MnmA"/>
    <property type="match status" value="1"/>
</dbReference>
<dbReference type="Gene3D" id="2.30.30.280">
    <property type="entry name" value="Adenine nucleotide alpha hydrolases-like domains"/>
    <property type="match status" value="1"/>
</dbReference>
<dbReference type="Gene3D" id="3.40.50.620">
    <property type="entry name" value="HUPs"/>
    <property type="match status" value="1"/>
</dbReference>
<dbReference type="Gene3D" id="2.40.30.10">
    <property type="entry name" value="Translation factors"/>
    <property type="match status" value="1"/>
</dbReference>
<dbReference type="HAMAP" id="MF_00144">
    <property type="entry name" value="tRNA_thiouridyl_MnmA"/>
    <property type="match status" value="1"/>
</dbReference>
<dbReference type="InterPro" id="IPR004506">
    <property type="entry name" value="MnmA-like"/>
</dbReference>
<dbReference type="InterPro" id="IPR046885">
    <property type="entry name" value="MnmA-like_C"/>
</dbReference>
<dbReference type="InterPro" id="IPR046884">
    <property type="entry name" value="MnmA-like_central"/>
</dbReference>
<dbReference type="InterPro" id="IPR023382">
    <property type="entry name" value="MnmA-like_central_sf"/>
</dbReference>
<dbReference type="InterPro" id="IPR014729">
    <property type="entry name" value="Rossmann-like_a/b/a_fold"/>
</dbReference>
<dbReference type="NCBIfam" id="NF001138">
    <property type="entry name" value="PRK00143.1"/>
    <property type="match status" value="1"/>
</dbReference>
<dbReference type="NCBIfam" id="TIGR00420">
    <property type="entry name" value="trmU"/>
    <property type="match status" value="1"/>
</dbReference>
<dbReference type="PANTHER" id="PTHR11933:SF5">
    <property type="entry name" value="MITOCHONDRIAL TRNA-SPECIFIC 2-THIOURIDYLASE 1"/>
    <property type="match status" value="1"/>
</dbReference>
<dbReference type="PANTHER" id="PTHR11933">
    <property type="entry name" value="TRNA 5-METHYLAMINOMETHYL-2-THIOURIDYLATE -METHYLTRANSFERASE"/>
    <property type="match status" value="1"/>
</dbReference>
<dbReference type="Pfam" id="PF03054">
    <property type="entry name" value="tRNA_Me_trans"/>
    <property type="match status" value="1"/>
</dbReference>
<dbReference type="Pfam" id="PF20258">
    <property type="entry name" value="tRNA_Me_trans_C"/>
    <property type="match status" value="1"/>
</dbReference>
<dbReference type="Pfam" id="PF20259">
    <property type="entry name" value="tRNA_Me_trans_M"/>
    <property type="match status" value="1"/>
</dbReference>
<dbReference type="SUPFAM" id="SSF52402">
    <property type="entry name" value="Adenine nucleotide alpha hydrolases-like"/>
    <property type="match status" value="1"/>
</dbReference>
<accession>B1JI67</accession>
<feature type="chain" id="PRO_0000349869" description="tRNA-specific 2-thiouridylase MnmA">
    <location>
        <begin position="1"/>
        <end position="371"/>
    </location>
</feature>
<feature type="region of interest" description="Interaction with target base in tRNA" evidence="1">
    <location>
        <begin position="98"/>
        <end position="100"/>
    </location>
</feature>
<feature type="region of interest" description="Interaction with tRNA" evidence="1">
    <location>
        <begin position="150"/>
        <end position="152"/>
    </location>
</feature>
<feature type="region of interest" description="Interaction with tRNA" evidence="1">
    <location>
        <begin position="312"/>
        <end position="313"/>
    </location>
</feature>
<feature type="active site" description="Nucleophile" evidence="1">
    <location>
        <position position="103"/>
    </location>
</feature>
<feature type="active site" description="Cysteine persulfide intermediate" evidence="1">
    <location>
        <position position="200"/>
    </location>
</feature>
<feature type="binding site" evidence="1">
    <location>
        <begin position="12"/>
        <end position="19"/>
    </location>
    <ligand>
        <name>ATP</name>
        <dbReference type="ChEBI" id="CHEBI:30616"/>
    </ligand>
</feature>
<feature type="binding site" evidence="1">
    <location>
        <position position="38"/>
    </location>
    <ligand>
        <name>ATP</name>
        <dbReference type="ChEBI" id="CHEBI:30616"/>
    </ligand>
</feature>
<feature type="binding site" evidence="1">
    <location>
        <position position="128"/>
    </location>
    <ligand>
        <name>ATP</name>
        <dbReference type="ChEBI" id="CHEBI:30616"/>
    </ligand>
</feature>
<feature type="site" description="Interaction with tRNA" evidence="1">
    <location>
        <position position="129"/>
    </location>
</feature>
<feature type="site" description="Interaction with tRNA" evidence="1">
    <location>
        <position position="345"/>
    </location>
</feature>
<feature type="disulfide bond" description="Alternate" evidence="1">
    <location>
        <begin position="103"/>
        <end position="200"/>
    </location>
</feature>
<protein>
    <recommendedName>
        <fullName evidence="1">tRNA-specific 2-thiouridylase MnmA</fullName>
        <ecNumber evidence="1">2.8.1.13</ecNumber>
    </recommendedName>
</protein>
<name>MNMA_YERPY</name>
<proteinExistence type="inferred from homology"/>
<organism>
    <name type="scientific">Yersinia pseudotuberculosis serotype O:3 (strain YPIII)</name>
    <dbReference type="NCBI Taxonomy" id="502800"/>
    <lineage>
        <taxon>Bacteria</taxon>
        <taxon>Pseudomonadati</taxon>
        <taxon>Pseudomonadota</taxon>
        <taxon>Gammaproteobacteria</taxon>
        <taxon>Enterobacterales</taxon>
        <taxon>Yersiniaceae</taxon>
        <taxon>Yersinia</taxon>
    </lineage>
</organism>
<gene>
    <name evidence="1" type="primary">mnmA</name>
    <name type="ordered locus">YPK_1720</name>
</gene>
<evidence type="ECO:0000255" key="1">
    <source>
        <dbReference type="HAMAP-Rule" id="MF_00144"/>
    </source>
</evidence>
<comment type="function">
    <text evidence="1">Catalyzes the 2-thiolation of uridine at the wobble position (U34) of tRNA(Lys), tRNA(Glu) and tRNA(Gln), leading to the formation of s(2)U34, the first step of tRNA-mnm(5)s(2)U34 synthesis. Sulfur is provided by IscS, via a sulfur-relay system. Binds ATP and its substrate tRNAs.</text>
</comment>
<comment type="catalytic activity">
    <reaction evidence="1">
        <text>S-sulfanyl-L-cysteinyl-[protein] + uridine(34) in tRNA + AH2 + ATP = 2-thiouridine(34) in tRNA + L-cysteinyl-[protein] + A + AMP + diphosphate + H(+)</text>
        <dbReference type="Rhea" id="RHEA:47032"/>
        <dbReference type="Rhea" id="RHEA-COMP:10131"/>
        <dbReference type="Rhea" id="RHEA-COMP:11726"/>
        <dbReference type="Rhea" id="RHEA-COMP:11727"/>
        <dbReference type="Rhea" id="RHEA-COMP:11728"/>
        <dbReference type="ChEBI" id="CHEBI:13193"/>
        <dbReference type="ChEBI" id="CHEBI:15378"/>
        <dbReference type="ChEBI" id="CHEBI:17499"/>
        <dbReference type="ChEBI" id="CHEBI:29950"/>
        <dbReference type="ChEBI" id="CHEBI:30616"/>
        <dbReference type="ChEBI" id="CHEBI:33019"/>
        <dbReference type="ChEBI" id="CHEBI:61963"/>
        <dbReference type="ChEBI" id="CHEBI:65315"/>
        <dbReference type="ChEBI" id="CHEBI:87170"/>
        <dbReference type="ChEBI" id="CHEBI:456215"/>
        <dbReference type="EC" id="2.8.1.13"/>
    </reaction>
</comment>
<comment type="subunit">
    <text evidence="1">Interacts with TusE.</text>
</comment>
<comment type="subcellular location">
    <subcellularLocation>
        <location evidence="1">Cytoplasm</location>
    </subcellularLocation>
</comment>
<comment type="similarity">
    <text evidence="1">Belongs to the MnmA/TRMU family.</text>
</comment>
<sequence>MSDNSQKKVIVGMSGGVDSSVSAYLLQQQGYQVAGLFMKNWEEDDDEEYCSAATDLADAQAVCDKLGMELHTVNFAAEYWDNVFELFLAEYKAGRTPNPDILCNKEIKFKAFLEFAAEDLGADYIATGHYVRRQDVDGKSRLLRGLDGNKDQSYFLYTLSHEQIAQSLFPVGELEKPEVRRIAEQLDLVTAKKKDSTGICFIGERKFRDFLGRYLPAQPGPIMTVDGQLVGKHQGLMYHTLGQRKGLGIGGTKEGGDDPWYVVDKDLDSNTLLVAQGHEHPRLMSVGLVAQQLHWVDRQPVTAPFRCVVKTRYRQQDIPCTVTPLDDERVDVRFDDPVAAVTPGQSAVFYQGEICLGGGIIEQRYPLTNPA</sequence>
<keyword id="KW-0067">ATP-binding</keyword>
<keyword id="KW-0963">Cytoplasm</keyword>
<keyword id="KW-1015">Disulfide bond</keyword>
<keyword id="KW-0547">Nucleotide-binding</keyword>
<keyword id="KW-0694">RNA-binding</keyword>
<keyword id="KW-0808">Transferase</keyword>
<keyword id="KW-0819">tRNA processing</keyword>
<keyword id="KW-0820">tRNA-binding</keyword>
<reference key="1">
    <citation type="submission" date="2008-02" db="EMBL/GenBank/DDBJ databases">
        <title>Complete sequence of Yersinia pseudotuberculosis YPIII.</title>
        <authorList>
            <consortium name="US DOE Joint Genome Institute"/>
            <person name="Copeland A."/>
            <person name="Lucas S."/>
            <person name="Lapidus A."/>
            <person name="Glavina del Rio T."/>
            <person name="Dalin E."/>
            <person name="Tice H."/>
            <person name="Bruce D."/>
            <person name="Goodwin L."/>
            <person name="Pitluck S."/>
            <person name="Munk A.C."/>
            <person name="Brettin T."/>
            <person name="Detter J.C."/>
            <person name="Han C."/>
            <person name="Tapia R."/>
            <person name="Schmutz J."/>
            <person name="Larimer F."/>
            <person name="Land M."/>
            <person name="Hauser L."/>
            <person name="Challacombe J.F."/>
            <person name="Green L."/>
            <person name="Lindler L.E."/>
            <person name="Nikolich M.P."/>
            <person name="Richardson P."/>
        </authorList>
    </citation>
    <scope>NUCLEOTIDE SEQUENCE [LARGE SCALE GENOMIC DNA]</scope>
    <source>
        <strain>YPIII</strain>
    </source>
</reference>